<protein>
    <recommendedName>
        <fullName>Early E3 20.5 kDa glycoprotein</fullName>
    </recommendedName>
</protein>
<dbReference type="EMBL" id="M23696">
    <property type="protein sequence ID" value="AAA53249.1"/>
    <property type="molecule type" value="Genomic_DNA"/>
</dbReference>
<dbReference type="PIR" id="A31830">
    <property type="entry name" value="ERAD75"/>
</dbReference>
<dbReference type="SMR" id="P15138"/>
<dbReference type="InterPro" id="IPR003471">
    <property type="entry name" value="Adeno_E3_CR1"/>
</dbReference>
<dbReference type="InterPro" id="IPR003470">
    <property type="entry name" value="Adeno_E3_CR2"/>
</dbReference>
<dbReference type="Pfam" id="PF02440">
    <property type="entry name" value="Adeno_E3_CR1"/>
    <property type="match status" value="1"/>
</dbReference>
<dbReference type="Pfam" id="PF02439">
    <property type="entry name" value="Adeno_E3_CR2"/>
    <property type="match status" value="1"/>
</dbReference>
<feature type="chain" id="PRO_0000221757" description="Early E3 20.5 kDa glycoprotein">
    <location>
        <begin position="1"/>
        <end position="189"/>
    </location>
</feature>
<feature type="glycosylation site" description="N-linked (GlcNAc...) asparagine; by host" evidence="1">
    <location>
        <position position="73"/>
    </location>
</feature>
<feature type="glycosylation site" description="N-linked (GlcNAc...) asparagine; by host" evidence="1">
    <location>
        <position position="137"/>
    </location>
</feature>
<organismHost>
    <name type="scientific">Homo sapiens</name>
    <name type="common">Human</name>
    <dbReference type="NCBI Taxonomy" id="9606"/>
</organismHost>
<sequence length="189" mass="20559">MISTTIFIISSLAAVTYGRSHLTVPVGSTCTLQGPQQGYVTWWRIYDNGGFARPCDQPGTKFSCNGRDLTIINITSNEQGFYYGTNYKDSLDYNIIVVPATTSAPRKTTFSSSSAKASTIPKTASAMLKLQKIALSNSTAAPKTIPKSTIGIITAVVVGLIIIFLCIMYYACCYRKHEQKGDALLNFDI</sequence>
<name>E321_ADE07</name>
<comment type="function">
    <text>E3 proteins seem to be dispensable for virus growth in tissue culture cells. They are potentially important for virus growth under special conditions; E3 region may help adenoviruses to evade the immune surveillance of the host.</text>
</comment>
<comment type="similarity">
    <text evidence="2">Belongs to the adenoviridae E3_20 family.</text>
</comment>
<accession>P15138</accession>
<keyword id="KW-0244">Early protein</keyword>
<keyword id="KW-0325">Glycoprotein</keyword>
<reference key="1">
    <citation type="journal article" date="1988" name="Virology">
        <title>Characterization of the early region 3 and fiber genes of Ad7.</title>
        <authorList>
            <person name="Hong J.S."/>
            <person name="Mullis K.G."/>
            <person name="Engler J.A."/>
        </authorList>
    </citation>
    <scope>NUCLEOTIDE SEQUENCE [GENOMIC DNA]</scope>
    <source>
        <strain>Gomen</strain>
    </source>
</reference>
<organism>
    <name type="scientific">Human adenovirus B serotype 7</name>
    <name type="common">HAdV-7</name>
    <name type="synonym">Human adenovirus 7</name>
    <dbReference type="NCBI Taxonomy" id="10519"/>
    <lineage>
        <taxon>Viruses</taxon>
        <taxon>Varidnaviria</taxon>
        <taxon>Bamfordvirae</taxon>
        <taxon>Preplasmiviricota</taxon>
        <taxon>Tectiliviricetes</taxon>
        <taxon>Rowavirales</taxon>
        <taxon>Adenoviridae</taxon>
        <taxon>Mastadenovirus</taxon>
        <taxon>Human mastadenovirus B</taxon>
    </lineage>
</organism>
<evidence type="ECO:0000255" key="1"/>
<evidence type="ECO:0000305" key="2"/>
<proteinExistence type="inferred from homology"/>